<reference key="1">
    <citation type="journal article" date="2009" name="Science">
        <title>Green evolution and dynamic adaptations revealed by genomes of the marine picoeukaryotes Micromonas.</title>
        <authorList>
            <person name="Worden A.Z."/>
            <person name="Lee J.H."/>
            <person name="Mock T."/>
            <person name="Rouze P."/>
            <person name="Simmons M.P."/>
            <person name="Aerts A.L."/>
            <person name="Allen A.E."/>
            <person name="Cuvelier M.L."/>
            <person name="Derelle E."/>
            <person name="Everett M.V."/>
            <person name="Foulon E."/>
            <person name="Grimwood J."/>
            <person name="Gundlach H."/>
            <person name="Henrissat B."/>
            <person name="Napoli C."/>
            <person name="McDonald S.M."/>
            <person name="Parker M.S."/>
            <person name="Rombauts S."/>
            <person name="Salamov A."/>
            <person name="Von Dassow P."/>
            <person name="Badger J.H."/>
            <person name="Coutinho P.M."/>
            <person name="Demir E."/>
            <person name="Dubchak I."/>
            <person name="Gentemann C."/>
            <person name="Eikrem W."/>
            <person name="Gready J.E."/>
            <person name="John U."/>
            <person name="Lanier W."/>
            <person name="Lindquist E.A."/>
            <person name="Lucas S."/>
            <person name="Mayer K.F."/>
            <person name="Moreau H."/>
            <person name="Not F."/>
            <person name="Otillar R."/>
            <person name="Panaud O."/>
            <person name="Pangilinan J."/>
            <person name="Paulsen I."/>
            <person name="Piegu B."/>
            <person name="Poliakov A."/>
            <person name="Robbens S."/>
            <person name="Schmutz J."/>
            <person name="Toulza E."/>
            <person name="Wyss T."/>
            <person name="Zelensky A."/>
            <person name="Zhou K."/>
            <person name="Armbrust E.V."/>
            <person name="Bhattacharya D."/>
            <person name="Goodenough U.W."/>
            <person name="Van de Peer Y."/>
            <person name="Grigoriev I.V."/>
        </authorList>
    </citation>
    <scope>NUCLEOTIDE SEQUENCE [LARGE SCALE GENOMIC DNA]</scope>
    <source>
        <strain>CCMP1545</strain>
    </source>
</reference>
<gene>
    <name type="ORF">MICPUCDRAFT_51778</name>
</gene>
<comment type="function">
    <text evidence="1">Promotes chloroplast protein synthesis. May act as a fidelity factor of the translation reaction, by catalyzing a one-codon backward translocation of tRNAs on improperly translocated ribosomes.</text>
</comment>
<comment type="catalytic activity">
    <reaction evidence="1">
        <text>GTP + H2O = GDP + phosphate + H(+)</text>
        <dbReference type="Rhea" id="RHEA:19669"/>
        <dbReference type="ChEBI" id="CHEBI:15377"/>
        <dbReference type="ChEBI" id="CHEBI:15378"/>
        <dbReference type="ChEBI" id="CHEBI:37565"/>
        <dbReference type="ChEBI" id="CHEBI:43474"/>
        <dbReference type="ChEBI" id="CHEBI:58189"/>
    </reaction>
</comment>
<comment type="subcellular location">
    <subcellularLocation>
        <location evidence="1">Plastid</location>
        <location evidence="1">Chloroplast</location>
    </subcellularLocation>
</comment>
<comment type="miscellaneous">
    <text evidence="1">This protein may be expected to contain an N-terminal transit peptide but none has been predicted.</text>
</comment>
<comment type="similarity">
    <text evidence="1">Belongs to the TRAFAC class translation factor GTPase superfamily. Classic translation factor GTPase family. LepA subfamily.</text>
</comment>
<keyword id="KW-0150">Chloroplast</keyword>
<keyword id="KW-0342">GTP-binding</keyword>
<keyword id="KW-0378">Hydrolase</keyword>
<keyword id="KW-0547">Nucleotide-binding</keyword>
<keyword id="KW-0934">Plastid</keyword>
<keyword id="KW-0648">Protein biosynthesis</keyword>
<keyword id="KW-1185">Reference proteome</keyword>
<dbReference type="EC" id="3.6.5.-"/>
<dbReference type="EMBL" id="GG663745">
    <property type="protein sequence ID" value="EEH53909.1"/>
    <property type="molecule type" value="Genomic_DNA"/>
</dbReference>
<dbReference type="SMR" id="C1N1Y2"/>
<dbReference type="STRING" id="564608.C1N1Y2"/>
<dbReference type="KEGG" id="mpp:MICPUCDRAFT_51778"/>
<dbReference type="eggNOG" id="KOG0462">
    <property type="taxonomic scope" value="Eukaryota"/>
</dbReference>
<dbReference type="OMA" id="EYSFVGY"/>
<dbReference type="OrthoDB" id="1074at2759"/>
<dbReference type="Proteomes" id="UP000001876">
    <property type="component" value="Unassembled WGS sequence"/>
</dbReference>
<dbReference type="GO" id="GO:0009507">
    <property type="term" value="C:chloroplast"/>
    <property type="evidence" value="ECO:0007669"/>
    <property type="project" value="UniProtKB-SubCell"/>
</dbReference>
<dbReference type="GO" id="GO:0005525">
    <property type="term" value="F:GTP binding"/>
    <property type="evidence" value="ECO:0007669"/>
    <property type="project" value="UniProtKB-UniRule"/>
</dbReference>
<dbReference type="GO" id="GO:0003924">
    <property type="term" value="F:GTPase activity"/>
    <property type="evidence" value="ECO:0007669"/>
    <property type="project" value="UniProtKB-UniRule"/>
</dbReference>
<dbReference type="GO" id="GO:0043022">
    <property type="term" value="F:ribosome binding"/>
    <property type="evidence" value="ECO:0007669"/>
    <property type="project" value="TreeGrafter"/>
</dbReference>
<dbReference type="GO" id="GO:0045727">
    <property type="term" value="P:positive regulation of translation"/>
    <property type="evidence" value="ECO:0007669"/>
    <property type="project" value="UniProtKB-UniRule"/>
</dbReference>
<dbReference type="GO" id="GO:0006412">
    <property type="term" value="P:translation"/>
    <property type="evidence" value="ECO:0007669"/>
    <property type="project" value="UniProtKB-KW"/>
</dbReference>
<dbReference type="CDD" id="cd03699">
    <property type="entry name" value="EF4_II"/>
    <property type="match status" value="1"/>
</dbReference>
<dbReference type="CDD" id="cd16260">
    <property type="entry name" value="EF4_III"/>
    <property type="match status" value="1"/>
</dbReference>
<dbReference type="CDD" id="cd01890">
    <property type="entry name" value="LepA"/>
    <property type="match status" value="1"/>
</dbReference>
<dbReference type="CDD" id="cd03709">
    <property type="entry name" value="lepA_C"/>
    <property type="match status" value="1"/>
</dbReference>
<dbReference type="FunFam" id="3.40.50.300:FF:000078">
    <property type="entry name" value="Elongation factor 4"/>
    <property type="match status" value="1"/>
</dbReference>
<dbReference type="FunFam" id="2.40.30.10:FF:000015">
    <property type="entry name" value="Translation factor GUF1, mitochondrial"/>
    <property type="match status" value="1"/>
</dbReference>
<dbReference type="FunFam" id="3.30.70.240:FF:000007">
    <property type="entry name" value="Translation factor GUF1, mitochondrial"/>
    <property type="match status" value="1"/>
</dbReference>
<dbReference type="FunFam" id="3.30.70.2570:FF:000001">
    <property type="entry name" value="Translation factor GUF1, mitochondrial"/>
    <property type="match status" value="1"/>
</dbReference>
<dbReference type="FunFam" id="3.30.70.870:FF:000004">
    <property type="entry name" value="Translation factor GUF1, mitochondrial"/>
    <property type="match status" value="1"/>
</dbReference>
<dbReference type="Gene3D" id="3.30.70.240">
    <property type="match status" value="1"/>
</dbReference>
<dbReference type="Gene3D" id="3.30.70.2570">
    <property type="entry name" value="Elongation factor 4, C-terminal domain"/>
    <property type="match status" value="1"/>
</dbReference>
<dbReference type="Gene3D" id="3.30.70.870">
    <property type="entry name" value="Elongation Factor G (Translational Gtpase), domain 3"/>
    <property type="match status" value="1"/>
</dbReference>
<dbReference type="Gene3D" id="3.40.50.300">
    <property type="entry name" value="P-loop containing nucleotide triphosphate hydrolases"/>
    <property type="match status" value="1"/>
</dbReference>
<dbReference type="Gene3D" id="2.40.30.10">
    <property type="entry name" value="Translation factors"/>
    <property type="match status" value="1"/>
</dbReference>
<dbReference type="HAMAP" id="MF_03138">
    <property type="entry name" value="GUFP"/>
    <property type="match status" value="1"/>
</dbReference>
<dbReference type="HAMAP" id="MF_00071">
    <property type="entry name" value="LepA"/>
    <property type="match status" value="1"/>
</dbReference>
<dbReference type="InterPro" id="IPR006297">
    <property type="entry name" value="EF-4"/>
</dbReference>
<dbReference type="InterPro" id="IPR035647">
    <property type="entry name" value="EFG_III/V"/>
</dbReference>
<dbReference type="InterPro" id="IPR000640">
    <property type="entry name" value="EFG_V-like"/>
</dbReference>
<dbReference type="InterPro" id="IPR004161">
    <property type="entry name" value="EFTu-like_2"/>
</dbReference>
<dbReference type="InterPro" id="IPR031157">
    <property type="entry name" value="G_TR_CS"/>
</dbReference>
<dbReference type="InterPro" id="IPR027518">
    <property type="entry name" value="GUFP"/>
</dbReference>
<dbReference type="InterPro" id="IPR038363">
    <property type="entry name" value="LepA_C_sf"/>
</dbReference>
<dbReference type="InterPro" id="IPR013842">
    <property type="entry name" value="LepA_CTD"/>
</dbReference>
<dbReference type="InterPro" id="IPR035654">
    <property type="entry name" value="LepA_IV"/>
</dbReference>
<dbReference type="InterPro" id="IPR027417">
    <property type="entry name" value="P-loop_NTPase"/>
</dbReference>
<dbReference type="InterPro" id="IPR005225">
    <property type="entry name" value="Small_GTP-bd"/>
</dbReference>
<dbReference type="InterPro" id="IPR000795">
    <property type="entry name" value="T_Tr_GTP-bd_dom"/>
</dbReference>
<dbReference type="InterPro" id="IPR009000">
    <property type="entry name" value="Transl_B-barrel_sf"/>
</dbReference>
<dbReference type="NCBIfam" id="TIGR01393">
    <property type="entry name" value="lepA"/>
    <property type="match status" value="1"/>
</dbReference>
<dbReference type="NCBIfam" id="TIGR00231">
    <property type="entry name" value="small_GTP"/>
    <property type="match status" value="1"/>
</dbReference>
<dbReference type="PANTHER" id="PTHR43512:SF4">
    <property type="entry name" value="TRANSLATION FACTOR GUF1 HOMOLOG, CHLOROPLASTIC"/>
    <property type="match status" value="1"/>
</dbReference>
<dbReference type="PANTHER" id="PTHR43512">
    <property type="entry name" value="TRANSLATION FACTOR GUF1-RELATED"/>
    <property type="match status" value="1"/>
</dbReference>
<dbReference type="Pfam" id="PF00679">
    <property type="entry name" value="EFG_C"/>
    <property type="match status" value="1"/>
</dbReference>
<dbReference type="Pfam" id="PF00009">
    <property type="entry name" value="GTP_EFTU"/>
    <property type="match status" value="1"/>
</dbReference>
<dbReference type="Pfam" id="PF03144">
    <property type="entry name" value="GTP_EFTU_D2"/>
    <property type="match status" value="1"/>
</dbReference>
<dbReference type="Pfam" id="PF06421">
    <property type="entry name" value="LepA_C"/>
    <property type="match status" value="1"/>
</dbReference>
<dbReference type="PRINTS" id="PR00315">
    <property type="entry name" value="ELONGATNFCT"/>
</dbReference>
<dbReference type="SUPFAM" id="SSF54980">
    <property type="entry name" value="EF-G C-terminal domain-like"/>
    <property type="match status" value="2"/>
</dbReference>
<dbReference type="SUPFAM" id="SSF52540">
    <property type="entry name" value="P-loop containing nucleoside triphosphate hydrolases"/>
    <property type="match status" value="1"/>
</dbReference>
<dbReference type="SUPFAM" id="SSF50447">
    <property type="entry name" value="Translation proteins"/>
    <property type="match status" value="1"/>
</dbReference>
<dbReference type="PROSITE" id="PS00301">
    <property type="entry name" value="G_TR_1"/>
    <property type="match status" value="1"/>
</dbReference>
<dbReference type="PROSITE" id="PS51722">
    <property type="entry name" value="G_TR_2"/>
    <property type="match status" value="1"/>
</dbReference>
<organism>
    <name type="scientific">Micromonas pusilla (strain CCMP1545)</name>
    <name type="common">Picoplanktonic green alga</name>
    <dbReference type="NCBI Taxonomy" id="564608"/>
    <lineage>
        <taxon>Eukaryota</taxon>
        <taxon>Viridiplantae</taxon>
        <taxon>Chlorophyta</taxon>
        <taxon>Mamiellophyceae</taxon>
        <taxon>Mamiellales</taxon>
        <taxon>Mamiellaceae</taxon>
        <taxon>Micromonas</taxon>
    </lineage>
</organism>
<accession>C1N1Y2</accession>
<feature type="chain" id="PRO_0000402914" description="Translation factor GUF1 homolog, chloroplastic">
    <location>
        <begin position="1"/>
        <end position="702"/>
    </location>
</feature>
<feature type="domain" description="tr-type G">
    <location>
        <begin position="87"/>
        <end position="283"/>
    </location>
</feature>
<feature type="region of interest" description="Disordered" evidence="2">
    <location>
        <begin position="1"/>
        <end position="41"/>
    </location>
</feature>
<feature type="compositionally biased region" description="Low complexity" evidence="2">
    <location>
        <begin position="1"/>
        <end position="30"/>
    </location>
</feature>
<feature type="binding site" evidence="1">
    <location>
        <begin position="96"/>
        <end position="103"/>
    </location>
    <ligand>
        <name>GTP</name>
        <dbReference type="ChEBI" id="CHEBI:37565"/>
    </ligand>
</feature>
<feature type="binding site" evidence="1">
    <location>
        <begin position="162"/>
        <end position="166"/>
    </location>
    <ligand>
        <name>GTP</name>
        <dbReference type="ChEBI" id="CHEBI:37565"/>
    </ligand>
</feature>
<feature type="binding site" evidence="1">
    <location>
        <begin position="216"/>
        <end position="219"/>
    </location>
    <ligand>
        <name>GTP</name>
        <dbReference type="ChEBI" id="CHEBI:37565"/>
    </ligand>
</feature>
<proteinExistence type="inferred from homology"/>
<protein>
    <recommendedName>
        <fullName evidence="1">Translation factor GUF1 homolog, chloroplastic</fullName>
        <ecNumber>3.6.5.-</ecNumber>
    </recommendedName>
    <alternativeName>
        <fullName evidence="1">Elongation factor 4 homolog</fullName>
        <shortName evidence="1">EF-4</shortName>
    </alternativeName>
    <alternativeName>
        <fullName evidence="1">GTPase GUF1 homolog</fullName>
    </alternativeName>
    <alternativeName>
        <fullName evidence="1">Ribosomal back-translocase</fullName>
    </alternativeName>
</protein>
<name>GUFP_MICPC</name>
<sequence>MASAAPASRGAARASTAARDAPFAAAARGPGRFRRDGNGRNRLVAVRAPRRWTTRAAATSGDANVVIKPKKERAKVDPNAVLQVPPSQIRNFSIIAHIDHGKSTLADTLLSKTKTVAARDMEAQLLDSMDIERERGITIKLNSARMNYVANDGETYVLNLIDTPGHVDFSYEVSRSLAACEGALLVVDASQGVEAQTVANVYLALENDLEIITVLNKIDLPGAEPERVKVRSIHWFPYDRVGVREIEDVLGLDTEDAVVASAKANIGMEDILENIVKMIPPPPDTGDEPLRALIFDSYFDPYRGVVVIFRVVDGNLGVGDAVKFMNTGKSYTIDEIGIMRPQKVPVNRLSAGEVGYMIANIKSVADARVGDTITTTKDSSTEPLPGYSEATPMVYCGLFPTDSDQYEDLRVALGKLQINDAALRYEPEQSSAMGFGFRCGFLGLLHMEIVQERLEREYDLGLITTAPSVVYKVYTSDGACVDIANPADLPDASVRDRIEEPFVKLEMFAPSDYVGSLMELAQQRRGEFIDMTYLSESRTCLKYDIPLGEVVTDFFDELKSRSKGYASMEYSFNEYRKSDLVRLDVLINYEPADPLACICHRDKSYVMGRGLVDKLKELIPRQMFRIPIQASIGTKVIASTSISAMRKDVLAKCYGGDISRKKKLLKKQAAGKKRMKQFGKVEVPQEAFMAVLKVDQNAGSGG</sequence>
<evidence type="ECO:0000255" key="1">
    <source>
        <dbReference type="HAMAP-Rule" id="MF_03138"/>
    </source>
</evidence>
<evidence type="ECO:0000256" key="2">
    <source>
        <dbReference type="SAM" id="MobiDB-lite"/>
    </source>
</evidence>